<protein>
    <recommendedName>
        <fullName>Uncharacterized protein ORF14</fullName>
    </recommendedName>
</protein>
<organismHost>
    <name type="scientific">Spiroplasma melliferum</name>
    <dbReference type="NCBI Taxonomy" id="2134"/>
</organismHost>
<name>ORF14_SPV1C</name>
<sequence length="36" mass="4269">MQTKQYFILRSLVKKYGKDNVINTVNKIAKDIEIKK</sequence>
<dbReference type="EMBL" id="U28974">
    <property type="protein sequence ID" value="AAA85013.1"/>
    <property type="molecule type" value="Genomic_DNA"/>
</dbReference>
<dbReference type="RefSeq" id="NP_620627.1">
    <property type="nucleotide sequence ID" value="NC_003793.1"/>
</dbReference>
<dbReference type="SMR" id="Q88420"/>
<dbReference type="KEGG" id="vg:944358"/>
<dbReference type="OrthoDB" id="40006at10239"/>
<dbReference type="Proteomes" id="UP000001764">
    <property type="component" value="Genome"/>
</dbReference>
<gene>
    <name type="ORF">ORF14</name>
</gene>
<reference key="1">
    <citation type="journal article" date="1996" name="Curr. Microbiol.">
        <title>Spiroplasma citri Virus SpV1: Characterization of viral sequences present in the spiroplasmal host chromosome.</title>
        <authorList>
            <person name="Bebear C.M."/>
            <person name="Aullo P."/>
            <person name="Bove J."/>
            <person name="Renaudin J."/>
        </authorList>
    </citation>
    <scope>NUCLEOTIDE SEQUENCE [GENOMIC DNA]</scope>
</reference>
<keyword id="KW-1185">Reference proteome</keyword>
<feature type="chain" id="PRO_0000372074" description="Uncharacterized protein ORF14">
    <location>
        <begin position="1"/>
        <end position="36"/>
    </location>
</feature>
<organism>
    <name type="scientific">Spiroplasma virus SpV1-C74</name>
    <name type="common">SpV1</name>
    <dbReference type="NCBI Taxonomy" id="185959"/>
    <lineage>
        <taxon>Viruses</taxon>
        <taxon>Monodnaviria</taxon>
        <taxon>Loebvirae</taxon>
        <taxon>Hofneiviricota</taxon>
        <taxon>Faserviricetes</taxon>
        <taxon>Tubulavirales</taxon>
        <taxon>Plectroviridae</taxon>
        <taxon>Vespertiliovirus</taxon>
        <taxon>Vespertiliovirus C74</taxon>
    </lineage>
</organism>
<proteinExistence type="predicted"/>
<accession>Q88420</accession>